<reference key="1">
    <citation type="journal article" date="2005" name="PLoS Biol.">
        <title>The genomes of Oryza sativa: a history of duplications.</title>
        <authorList>
            <person name="Yu J."/>
            <person name="Wang J."/>
            <person name="Lin W."/>
            <person name="Li S."/>
            <person name="Li H."/>
            <person name="Zhou J."/>
            <person name="Ni P."/>
            <person name="Dong W."/>
            <person name="Hu S."/>
            <person name="Zeng C."/>
            <person name="Zhang J."/>
            <person name="Zhang Y."/>
            <person name="Li R."/>
            <person name="Xu Z."/>
            <person name="Li S."/>
            <person name="Li X."/>
            <person name="Zheng H."/>
            <person name="Cong L."/>
            <person name="Lin L."/>
            <person name="Yin J."/>
            <person name="Geng J."/>
            <person name="Li G."/>
            <person name="Shi J."/>
            <person name="Liu J."/>
            <person name="Lv H."/>
            <person name="Li J."/>
            <person name="Wang J."/>
            <person name="Deng Y."/>
            <person name="Ran L."/>
            <person name="Shi X."/>
            <person name="Wang X."/>
            <person name="Wu Q."/>
            <person name="Li C."/>
            <person name="Ren X."/>
            <person name="Wang J."/>
            <person name="Wang X."/>
            <person name="Li D."/>
            <person name="Liu D."/>
            <person name="Zhang X."/>
            <person name="Ji Z."/>
            <person name="Zhao W."/>
            <person name="Sun Y."/>
            <person name="Zhang Z."/>
            <person name="Bao J."/>
            <person name="Han Y."/>
            <person name="Dong L."/>
            <person name="Ji J."/>
            <person name="Chen P."/>
            <person name="Wu S."/>
            <person name="Liu J."/>
            <person name="Xiao Y."/>
            <person name="Bu D."/>
            <person name="Tan J."/>
            <person name="Yang L."/>
            <person name="Ye C."/>
            <person name="Zhang J."/>
            <person name="Xu J."/>
            <person name="Zhou Y."/>
            <person name="Yu Y."/>
            <person name="Zhang B."/>
            <person name="Zhuang S."/>
            <person name="Wei H."/>
            <person name="Liu B."/>
            <person name="Lei M."/>
            <person name="Yu H."/>
            <person name="Li Y."/>
            <person name="Xu H."/>
            <person name="Wei S."/>
            <person name="He X."/>
            <person name="Fang L."/>
            <person name="Zhang Z."/>
            <person name="Zhang Y."/>
            <person name="Huang X."/>
            <person name="Su Z."/>
            <person name="Tong W."/>
            <person name="Li J."/>
            <person name="Tong Z."/>
            <person name="Li S."/>
            <person name="Ye J."/>
            <person name="Wang L."/>
            <person name="Fang L."/>
            <person name="Lei T."/>
            <person name="Chen C.-S."/>
            <person name="Chen H.-C."/>
            <person name="Xu Z."/>
            <person name="Li H."/>
            <person name="Huang H."/>
            <person name="Zhang F."/>
            <person name="Xu H."/>
            <person name="Li N."/>
            <person name="Zhao C."/>
            <person name="Li S."/>
            <person name="Dong L."/>
            <person name="Huang Y."/>
            <person name="Li L."/>
            <person name="Xi Y."/>
            <person name="Qi Q."/>
            <person name="Li W."/>
            <person name="Zhang B."/>
            <person name="Hu W."/>
            <person name="Zhang Y."/>
            <person name="Tian X."/>
            <person name="Jiao Y."/>
            <person name="Liang X."/>
            <person name="Jin J."/>
            <person name="Gao L."/>
            <person name="Zheng W."/>
            <person name="Hao B."/>
            <person name="Liu S.-M."/>
            <person name="Wang W."/>
            <person name="Yuan L."/>
            <person name="Cao M."/>
            <person name="McDermott J."/>
            <person name="Samudrala R."/>
            <person name="Wang J."/>
            <person name="Wong G.K.-S."/>
            <person name="Yang H."/>
        </authorList>
    </citation>
    <scope>NUCLEOTIDE SEQUENCE [LARGE SCALE GENOMIC DNA]</scope>
    <source>
        <strain>cv. 93-11</strain>
    </source>
</reference>
<organism>
    <name type="scientific">Oryza sativa subsp. indica</name>
    <name type="common">Rice</name>
    <dbReference type="NCBI Taxonomy" id="39946"/>
    <lineage>
        <taxon>Eukaryota</taxon>
        <taxon>Viridiplantae</taxon>
        <taxon>Streptophyta</taxon>
        <taxon>Embryophyta</taxon>
        <taxon>Tracheophyta</taxon>
        <taxon>Spermatophyta</taxon>
        <taxon>Magnoliopsida</taxon>
        <taxon>Liliopsida</taxon>
        <taxon>Poales</taxon>
        <taxon>Poaceae</taxon>
        <taxon>BOP clade</taxon>
        <taxon>Oryzoideae</taxon>
        <taxon>Oryzeae</taxon>
        <taxon>Oryzinae</taxon>
        <taxon>Oryza</taxon>
        <taxon>Oryza sativa</taxon>
    </lineage>
</organism>
<evidence type="ECO:0000250" key="1"/>
<evidence type="ECO:0000305" key="2"/>
<comment type="function">
    <text>Core component of nucleosome. Nucleosomes wrap and compact DNA into chromatin, limiting DNA accessibility to the cellular machineries which require DNA as a template. Histones thereby play a central role in transcription regulation, DNA repair, DNA replication and chromosomal stability. DNA accessibility is regulated via a complex set of post-translational modifications of histones, also called histone code, and nucleosome remodeling.</text>
</comment>
<comment type="subunit">
    <text>The nucleosome is a histone octamer containing two molecules each of H2A, H2B, H3 and H4 assembled in one H3-H4 heterotetramer and two H2A-H2B heterodimers. The octamer wraps approximately 147 bp of DNA.</text>
</comment>
<comment type="subcellular location">
    <subcellularLocation>
        <location evidence="1">Nucleus</location>
    </subcellularLocation>
    <subcellularLocation>
        <location evidence="1">Chromosome</location>
    </subcellularLocation>
</comment>
<comment type="similarity">
    <text evidence="2">Belongs to the histone H2A family.</text>
</comment>
<dbReference type="EMBL" id="CM000133">
    <property type="protein sequence ID" value="EAZ07056.1"/>
    <property type="molecule type" value="Genomic_DNA"/>
</dbReference>
<dbReference type="SMR" id="A2YVE5"/>
<dbReference type="STRING" id="39946.A2YVE5"/>
<dbReference type="EnsemblPlants" id="BGIOSGA028706-TA">
    <property type="protein sequence ID" value="BGIOSGA028706-PA"/>
    <property type="gene ID" value="BGIOSGA028706"/>
</dbReference>
<dbReference type="EnsemblPlants" id="OsGoSa_08g0016040.01">
    <property type="protein sequence ID" value="OsGoSa_08g0016040.01"/>
    <property type="gene ID" value="OsGoSa_08g0016040"/>
</dbReference>
<dbReference type="EnsemblPlants" id="OsIR64_08g0016610.01">
    <property type="protein sequence ID" value="OsIR64_08g0016610.01"/>
    <property type="gene ID" value="OsIR64_08g0016610"/>
</dbReference>
<dbReference type="EnsemblPlants" id="OsKYG_08g0016250.01">
    <property type="protein sequence ID" value="OsKYG_08g0016250.01"/>
    <property type="gene ID" value="OsKYG_08g0016250"/>
</dbReference>
<dbReference type="EnsemblPlants" id="OsLaMu_08g0016260.01">
    <property type="protein sequence ID" value="OsLaMu_08g0016260.01"/>
    <property type="gene ID" value="OsLaMu_08g0016260"/>
</dbReference>
<dbReference type="EnsemblPlants" id="OsLima_08g0015970.01">
    <property type="protein sequence ID" value="OsLima_08g0015970.01"/>
    <property type="gene ID" value="OsLima_08g0015970"/>
</dbReference>
<dbReference type="EnsemblPlants" id="OsLiXu_08g0016860.01">
    <property type="protein sequence ID" value="OsLiXu_08g0016860.01"/>
    <property type="gene ID" value="OsLiXu_08g0016860"/>
</dbReference>
<dbReference type="EnsemblPlants" id="OsMH63_08G016730_01">
    <property type="protein sequence ID" value="OsMH63_08G016730_01"/>
    <property type="gene ID" value="OsMH63_08G016730"/>
</dbReference>
<dbReference type="EnsemblPlants" id="OsPr106_08g0016710.01">
    <property type="protein sequence ID" value="OsPr106_08g0016710.01"/>
    <property type="gene ID" value="OsPr106_08g0016710"/>
</dbReference>
<dbReference type="EnsemblPlants" id="OsZS97_08G016690_01">
    <property type="protein sequence ID" value="OsZS97_08G016690_01"/>
    <property type="gene ID" value="OsZS97_08G016690"/>
</dbReference>
<dbReference type="Gramene" id="BGIOSGA028706-TA">
    <property type="protein sequence ID" value="BGIOSGA028706-PA"/>
    <property type="gene ID" value="BGIOSGA028706"/>
</dbReference>
<dbReference type="Gramene" id="OsGoSa_08g0016040.01">
    <property type="protein sequence ID" value="OsGoSa_08g0016040.01"/>
    <property type="gene ID" value="OsGoSa_08g0016040"/>
</dbReference>
<dbReference type="Gramene" id="OsIR64_08g0016610.01">
    <property type="protein sequence ID" value="OsIR64_08g0016610.01"/>
    <property type="gene ID" value="OsIR64_08g0016610"/>
</dbReference>
<dbReference type="Gramene" id="OsKYG_08g0016250.01">
    <property type="protein sequence ID" value="OsKYG_08g0016250.01"/>
    <property type="gene ID" value="OsKYG_08g0016250"/>
</dbReference>
<dbReference type="Gramene" id="OsLaMu_08g0016260.01">
    <property type="protein sequence ID" value="OsLaMu_08g0016260.01"/>
    <property type="gene ID" value="OsLaMu_08g0016260"/>
</dbReference>
<dbReference type="Gramene" id="OsLima_08g0015970.01">
    <property type="protein sequence ID" value="OsLima_08g0015970.01"/>
    <property type="gene ID" value="OsLima_08g0015970"/>
</dbReference>
<dbReference type="Gramene" id="OsLiXu_08g0016860.01">
    <property type="protein sequence ID" value="OsLiXu_08g0016860.01"/>
    <property type="gene ID" value="OsLiXu_08g0016860"/>
</dbReference>
<dbReference type="Gramene" id="OsMH63_08G016730_01">
    <property type="protein sequence ID" value="OsMH63_08G016730_01"/>
    <property type="gene ID" value="OsMH63_08G016730"/>
</dbReference>
<dbReference type="Gramene" id="OsPr106_08g0016710.01">
    <property type="protein sequence ID" value="OsPr106_08g0016710.01"/>
    <property type="gene ID" value="OsPr106_08g0016710"/>
</dbReference>
<dbReference type="Gramene" id="OsZS97_08G016690_01">
    <property type="protein sequence ID" value="OsZS97_08G016690_01"/>
    <property type="gene ID" value="OsZS97_08G016690"/>
</dbReference>
<dbReference type="HOGENOM" id="CLU_062828_3_0_1"/>
<dbReference type="OMA" id="ANEMFIN"/>
<dbReference type="OrthoDB" id="9421954at2759"/>
<dbReference type="Proteomes" id="UP000007015">
    <property type="component" value="Chromosome 8"/>
</dbReference>
<dbReference type="GO" id="GO:0000786">
    <property type="term" value="C:nucleosome"/>
    <property type="evidence" value="ECO:0007669"/>
    <property type="project" value="UniProtKB-KW"/>
</dbReference>
<dbReference type="GO" id="GO:0005634">
    <property type="term" value="C:nucleus"/>
    <property type="evidence" value="ECO:0007669"/>
    <property type="project" value="UniProtKB-SubCell"/>
</dbReference>
<dbReference type="GO" id="GO:0003677">
    <property type="term" value="F:DNA binding"/>
    <property type="evidence" value="ECO:0007669"/>
    <property type="project" value="UniProtKB-KW"/>
</dbReference>
<dbReference type="GO" id="GO:0046982">
    <property type="term" value="F:protein heterodimerization activity"/>
    <property type="evidence" value="ECO:0007669"/>
    <property type="project" value="InterPro"/>
</dbReference>
<dbReference type="GO" id="GO:0030527">
    <property type="term" value="F:structural constituent of chromatin"/>
    <property type="evidence" value="ECO:0007669"/>
    <property type="project" value="InterPro"/>
</dbReference>
<dbReference type="CDD" id="cd00074">
    <property type="entry name" value="HFD_H2A"/>
    <property type="match status" value="1"/>
</dbReference>
<dbReference type="FunFam" id="1.10.20.10:FF:000009">
    <property type="entry name" value="Histone H2A"/>
    <property type="match status" value="1"/>
</dbReference>
<dbReference type="Gene3D" id="1.10.20.10">
    <property type="entry name" value="Histone, subunit A"/>
    <property type="match status" value="1"/>
</dbReference>
<dbReference type="InterPro" id="IPR009072">
    <property type="entry name" value="Histone-fold"/>
</dbReference>
<dbReference type="InterPro" id="IPR002119">
    <property type="entry name" value="Histone_H2A"/>
</dbReference>
<dbReference type="InterPro" id="IPR007125">
    <property type="entry name" value="Histone_H2A/H2B/H3"/>
</dbReference>
<dbReference type="InterPro" id="IPR032454">
    <property type="entry name" value="Histone_H2A_C"/>
</dbReference>
<dbReference type="InterPro" id="IPR032458">
    <property type="entry name" value="Histone_H2A_CS"/>
</dbReference>
<dbReference type="PANTHER" id="PTHR23430">
    <property type="entry name" value="HISTONE H2A"/>
    <property type="match status" value="1"/>
</dbReference>
<dbReference type="Pfam" id="PF00125">
    <property type="entry name" value="Histone"/>
    <property type="match status" value="1"/>
</dbReference>
<dbReference type="Pfam" id="PF16211">
    <property type="entry name" value="Histone_H2A_C"/>
    <property type="match status" value="1"/>
</dbReference>
<dbReference type="PRINTS" id="PR00620">
    <property type="entry name" value="HISTONEH2A"/>
</dbReference>
<dbReference type="SMART" id="SM00414">
    <property type="entry name" value="H2A"/>
    <property type="match status" value="1"/>
</dbReference>
<dbReference type="SUPFAM" id="SSF47113">
    <property type="entry name" value="Histone-fold"/>
    <property type="match status" value="1"/>
</dbReference>
<dbReference type="PROSITE" id="PS00046">
    <property type="entry name" value="HISTONE_H2A"/>
    <property type="match status" value="1"/>
</dbReference>
<sequence length="134" mass="13917">MAGRGKAIGSSAAKKATSRSSKAGLQFPVGRIARFLKAGKYAERVGAGAPVYLAAVLEYLAAEVLELAGNAARDNKKTRIVPRHIQLAVRNDEELSRLLGAVTIANGGVMPNIHNLLLPKKAGSSAKAAAADDE</sequence>
<feature type="chain" id="PRO_0000296121" description="Probable histone H2A.3">
    <location>
        <begin position="1"/>
        <end position="134"/>
    </location>
</feature>
<proteinExistence type="inferred from homology"/>
<keyword id="KW-0158">Chromosome</keyword>
<keyword id="KW-0238">DNA-binding</keyword>
<keyword id="KW-0544">Nucleosome core</keyword>
<keyword id="KW-0539">Nucleus</keyword>
<keyword id="KW-1185">Reference proteome</keyword>
<accession>A2YVE5</accession>
<name>H2A3_ORYSI</name>
<protein>
    <recommendedName>
        <fullName>Probable histone H2A.3</fullName>
    </recommendedName>
</protein>
<gene>
    <name type="ORF">OsI_028288</name>
</gene>